<gene>
    <name evidence="1" type="primary">rpl16</name>
</gene>
<comment type="subunit">
    <text evidence="1">Part of the 50S ribosomal subunit.</text>
</comment>
<comment type="subcellular location">
    <subcellularLocation>
        <location>Plastid</location>
        <location>Chloroplast</location>
    </subcellularLocation>
</comment>
<comment type="similarity">
    <text evidence="1">Belongs to the universal ribosomal protein uL16 family.</text>
</comment>
<proteinExistence type="inferred from homology"/>
<feature type="chain" id="PRO_0000354615" description="Large ribosomal subunit protein uL16c">
    <location>
        <begin position="1"/>
        <end position="135"/>
    </location>
</feature>
<dbReference type="EMBL" id="AP009369">
    <property type="protein sequence ID" value="BAF50060.1"/>
    <property type="molecule type" value="Genomic_DNA"/>
</dbReference>
<dbReference type="RefSeq" id="YP_001123236.1">
    <property type="nucleotide sequence ID" value="NC_009268.1"/>
</dbReference>
<dbReference type="SMR" id="A4QK55"/>
<dbReference type="GeneID" id="4962505"/>
<dbReference type="GO" id="GO:0009507">
    <property type="term" value="C:chloroplast"/>
    <property type="evidence" value="ECO:0007669"/>
    <property type="project" value="UniProtKB-SubCell"/>
</dbReference>
<dbReference type="GO" id="GO:0005762">
    <property type="term" value="C:mitochondrial large ribosomal subunit"/>
    <property type="evidence" value="ECO:0007669"/>
    <property type="project" value="TreeGrafter"/>
</dbReference>
<dbReference type="GO" id="GO:0019843">
    <property type="term" value="F:rRNA binding"/>
    <property type="evidence" value="ECO:0007669"/>
    <property type="project" value="InterPro"/>
</dbReference>
<dbReference type="GO" id="GO:0003735">
    <property type="term" value="F:structural constituent of ribosome"/>
    <property type="evidence" value="ECO:0007669"/>
    <property type="project" value="InterPro"/>
</dbReference>
<dbReference type="GO" id="GO:0032543">
    <property type="term" value="P:mitochondrial translation"/>
    <property type="evidence" value="ECO:0007669"/>
    <property type="project" value="TreeGrafter"/>
</dbReference>
<dbReference type="CDD" id="cd01433">
    <property type="entry name" value="Ribosomal_L16_L10e"/>
    <property type="match status" value="1"/>
</dbReference>
<dbReference type="FunFam" id="3.90.1170.10:FF:000001">
    <property type="entry name" value="50S ribosomal protein L16"/>
    <property type="match status" value="1"/>
</dbReference>
<dbReference type="Gene3D" id="3.90.1170.10">
    <property type="entry name" value="Ribosomal protein L10e/L16"/>
    <property type="match status" value="1"/>
</dbReference>
<dbReference type="HAMAP" id="MF_01342">
    <property type="entry name" value="Ribosomal_uL16"/>
    <property type="match status" value="1"/>
</dbReference>
<dbReference type="InterPro" id="IPR047873">
    <property type="entry name" value="Ribosomal_uL16"/>
</dbReference>
<dbReference type="InterPro" id="IPR000114">
    <property type="entry name" value="Ribosomal_uL16_bact-type"/>
</dbReference>
<dbReference type="InterPro" id="IPR020798">
    <property type="entry name" value="Ribosomal_uL16_CS"/>
</dbReference>
<dbReference type="InterPro" id="IPR016180">
    <property type="entry name" value="Ribosomal_uL16_dom"/>
</dbReference>
<dbReference type="InterPro" id="IPR036920">
    <property type="entry name" value="Ribosomal_uL16_sf"/>
</dbReference>
<dbReference type="NCBIfam" id="TIGR01164">
    <property type="entry name" value="rplP_bact"/>
    <property type="match status" value="1"/>
</dbReference>
<dbReference type="PANTHER" id="PTHR12220">
    <property type="entry name" value="50S/60S RIBOSOMAL PROTEIN L16"/>
    <property type="match status" value="1"/>
</dbReference>
<dbReference type="PANTHER" id="PTHR12220:SF13">
    <property type="entry name" value="LARGE RIBOSOMAL SUBUNIT PROTEIN UL16M"/>
    <property type="match status" value="1"/>
</dbReference>
<dbReference type="Pfam" id="PF00252">
    <property type="entry name" value="Ribosomal_L16"/>
    <property type="match status" value="1"/>
</dbReference>
<dbReference type="PRINTS" id="PR00060">
    <property type="entry name" value="RIBOSOMALL16"/>
</dbReference>
<dbReference type="SUPFAM" id="SSF54686">
    <property type="entry name" value="Ribosomal protein L16p/L10e"/>
    <property type="match status" value="1"/>
</dbReference>
<dbReference type="PROSITE" id="PS00586">
    <property type="entry name" value="RIBOSOMAL_L16_1"/>
    <property type="match status" value="1"/>
</dbReference>
<dbReference type="PROSITE" id="PS00701">
    <property type="entry name" value="RIBOSOMAL_L16_2"/>
    <property type="match status" value="1"/>
</dbReference>
<name>RK16_ARAHI</name>
<reference key="1">
    <citation type="submission" date="2007-03" db="EMBL/GenBank/DDBJ databases">
        <title>Sequencing analysis of Arabis hirsuta chloroplast DNA.</title>
        <authorList>
            <person name="Hosouchi T."/>
            <person name="Tsuruoka H."/>
            <person name="Kotani H."/>
        </authorList>
    </citation>
    <scope>NUCLEOTIDE SEQUENCE [LARGE SCALE GENOMIC DNA]</scope>
</reference>
<geneLocation type="chloroplast"/>
<accession>A4QK55</accession>
<sequence length="135" mass="15294">MLSPKRTRFRKQHRGRLKGISSRGNRICFGRYALQTLEPAWITSRQIEAGRRAMTRNVRRGGKIWVRIFPDKPVTVRPAETRMGSGKGSPEYWVAVVKPGKILYEMGGVPENIARKAISIAASKMPIKTQFIISE</sequence>
<organism>
    <name type="scientific">Arabis hirsuta</name>
    <name type="common">Hairy rock-cress</name>
    <name type="synonym">Turritis hirsuta</name>
    <dbReference type="NCBI Taxonomy" id="78191"/>
    <lineage>
        <taxon>Eukaryota</taxon>
        <taxon>Viridiplantae</taxon>
        <taxon>Streptophyta</taxon>
        <taxon>Embryophyta</taxon>
        <taxon>Tracheophyta</taxon>
        <taxon>Spermatophyta</taxon>
        <taxon>Magnoliopsida</taxon>
        <taxon>eudicotyledons</taxon>
        <taxon>Gunneridae</taxon>
        <taxon>Pentapetalae</taxon>
        <taxon>rosids</taxon>
        <taxon>malvids</taxon>
        <taxon>Brassicales</taxon>
        <taxon>Brassicaceae</taxon>
        <taxon>Arabideae</taxon>
        <taxon>Arabis</taxon>
    </lineage>
</organism>
<keyword id="KW-0150">Chloroplast</keyword>
<keyword id="KW-0934">Plastid</keyword>
<keyword id="KW-0687">Ribonucleoprotein</keyword>
<keyword id="KW-0689">Ribosomal protein</keyword>
<protein>
    <recommendedName>
        <fullName evidence="1">Large ribosomal subunit protein uL16c</fullName>
    </recommendedName>
    <alternativeName>
        <fullName evidence="2">50S ribosomal protein L16, chloroplastic</fullName>
    </alternativeName>
</protein>
<evidence type="ECO:0000255" key="1">
    <source>
        <dbReference type="HAMAP-Rule" id="MF_01342"/>
    </source>
</evidence>
<evidence type="ECO:0000305" key="2"/>